<accession>B3DQC1</accession>
<protein>
    <recommendedName>
        <fullName evidence="1">Large ribosomal subunit protein uL16</fullName>
    </recommendedName>
    <alternativeName>
        <fullName evidence="3">50S ribosomal protein L16</fullName>
    </alternativeName>
</protein>
<dbReference type="EMBL" id="CP000605">
    <property type="protein sequence ID" value="ACD99159.1"/>
    <property type="molecule type" value="Genomic_DNA"/>
</dbReference>
<dbReference type="RefSeq" id="WP_007053037.1">
    <property type="nucleotide sequence ID" value="NZ_AABM02000025.1"/>
</dbReference>
<dbReference type="SMR" id="B3DQC1"/>
<dbReference type="GeneID" id="69578890"/>
<dbReference type="KEGG" id="blj:BLD_1714"/>
<dbReference type="HOGENOM" id="CLU_078858_2_1_11"/>
<dbReference type="Proteomes" id="UP000002419">
    <property type="component" value="Chromosome"/>
</dbReference>
<dbReference type="GO" id="GO:0022625">
    <property type="term" value="C:cytosolic large ribosomal subunit"/>
    <property type="evidence" value="ECO:0007669"/>
    <property type="project" value="TreeGrafter"/>
</dbReference>
<dbReference type="GO" id="GO:0019843">
    <property type="term" value="F:rRNA binding"/>
    <property type="evidence" value="ECO:0007669"/>
    <property type="project" value="UniProtKB-UniRule"/>
</dbReference>
<dbReference type="GO" id="GO:0003735">
    <property type="term" value="F:structural constituent of ribosome"/>
    <property type="evidence" value="ECO:0007669"/>
    <property type="project" value="InterPro"/>
</dbReference>
<dbReference type="GO" id="GO:0000049">
    <property type="term" value="F:tRNA binding"/>
    <property type="evidence" value="ECO:0007669"/>
    <property type="project" value="UniProtKB-KW"/>
</dbReference>
<dbReference type="GO" id="GO:0006412">
    <property type="term" value="P:translation"/>
    <property type="evidence" value="ECO:0007669"/>
    <property type="project" value="UniProtKB-UniRule"/>
</dbReference>
<dbReference type="CDD" id="cd01433">
    <property type="entry name" value="Ribosomal_L16_L10e"/>
    <property type="match status" value="1"/>
</dbReference>
<dbReference type="FunFam" id="3.90.1170.10:FF:000001">
    <property type="entry name" value="50S ribosomal protein L16"/>
    <property type="match status" value="1"/>
</dbReference>
<dbReference type="Gene3D" id="3.90.1170.10">
    <property type="entry name" value="Ribosomal protein L10e/L16"/>
    <property type="match status" value="1"/>
</dbReference>
<dbReference type="HAMAP" id="MF_01342">
    <property type="entry name" value="Ribosomal_uL16"/>
    <property type="match status" value="1"/>
</dbReference>
<dbReference type="InterPro" id="IPR047873">
    <property type="entry name" value="Ribosomal_uL16"/>
</dbReference>
<dbReference type="InterPro" id="IPR000114">
    <property type="entry name" value="Ribosomal_uL16_bact-type"/>
</dbReference>
<dbReference type="InterPro" id="IPR020798">
    <property type="entry name" value="Ribosomal_uL16_CS"/>
</dbReference>
<dbReference type="InterPro" id="IPR016180">
    <property type="entry name" value="Ribosomal_uL16_dom"/>
</dbReference>
<dbReference type="InterPro" id="IPR036920">
    <property type="entry name" value="Ribosomal_uL16_sf"/>
</dbReference>
<dbReference type="NCBIfam" id="TIGR01164">
    <property type="entry name" value="rplP_bact"/>
    <property type="match status" value="1"/>
</dbReference>
<dbReference type="PANTHER" id="PTHR12220">
    <property type="entry name" value="50S/60S RIBOSOMAL PROTEIN L16"/>
    <property type="match status" value="1"/>
</dbReference>
<dbReference type="PANTHER" id="PTHR12220:SF13">
    <property type="entry name" value="LARGE RIBOSOMAL SUBUNIT PROTEIN UL16M"/>
    <property type="match status" value="1"/>
</dbReference>
<dbReference type="Pfam" id="PF00252">
    <property type="entry name" value="Ribosomal_L16"/>
    <property type="match status" value="1"/>
</dbReference>
<dbReference type="PRINTS" id="PR00060">
    <property type="entry name" value="RIBOSOMALL16"/>
</dbReference>
<dbReference type="SUPFAM" id="SSF54686">
    <property type="entry name" value="Ribosomal protein L16p/L10e"/>
    <property type="match status" value="1"/>
</dbReference>
<dbReference type="PROSITE" id="PS00701">
    <property type="entry name" value="RIBOSOMAL_L16_2"/>
    <property type="match status" value="1"/>
</dbReference>
<sequence length="139" mass="15603">MLIPKRTKYRKQHRPVRSGMSKGGNEINFGDFAIQSLAPAYVTNRQIEAARIAMTRYIKRGGRVWITIFPDRPLTKHPLGARMGSGKGAPEFWIANVRPGRVMFEIGGVSEDIAKEALRRAIDKLPMKCRIIAREGGDI</sequence>
<keyword id="KW-0687">Ribonucleoprotein</keyword>
<keyword id="KW-0689">Ribosomal protein</keyword>
<keyword id="KW-0694">RNA-binding</keyword>
<keyword id="KW-0699">rRNA-binding</keyword>
<keyword id="KW-0820">tRNA-binding</keyword>
<gene>
    <name evidence="1" type="primary">rplP</name>
    <name type="ordered locus">BLD_1714</name>
</gene>
<evidence type="ECO:0000255" key="1">
    <source>
        <dbReference type="HAMAP-Rule" id="MF_01342"/>
    </source>
</evidence>
<evidence type="ECO:0000256" key="2">
    <source>
        <dbReference type="SAM" id="MobiDB-lite"/>
    </source>
</evidence>
<evidence type="ECO:0000305" key="3"/>
<comment type="function">
    <text evidence="1">Binds 23S rRNA and is also seen to make contacts with the A and possibly P site tRNAs.</text>
</comment>
<comment type="subunit">
    <text evidence="1">Part of the 50S ribosomal subunit.</text>
</comment>
<comment type="similarity">
    <text evidence="1">Belongs to the universal ribosomal protein uL16 family.</text>
</comment>
<proteinExistence type="inferred from homology"/>
<reference key="1">
    <citation type="journal article" date="2008" name="BMC Genomics">
        <title>Comparative genomic analysis of the gut bacterium Bifidobacterium longum reveals loci susceptible to deletion during pure culture growth.</title>
        <authorList>
            <person name="Lee J.H."/>
            <person name="Karamychev V.N."/>
            <person name="Kozyavkin S.A."/>
            <person name="Mills D."/>
            <person name="Pavlov A.R."/>
            <person name="Pavlova N.V."/>
            <person name="Polouchine N.N."/>
            <person name="Richardson P.M."/>
            <person name="Shakhova V.V."/>
            <person name="Slesarev A.I."/>
            <person name="Weimer B."/>
            <person name="O'Sullivan D.J."/>
        </authorList>
    </citation>
    <scope>NUCLEOTIDE SEQUENCE [LARGE SCALE GENOMIC DNA]</scope>
    <source>
        <strain>DJO10A</strain>
    </source>
</reference>
<feature type="chain" id="PRO_1000142928" description="Large ribosomal subunit protein uL16">
    <location>
        <begin position="1"/>
        <end position="139"/>
    </location>
</feature>
<feature type="region of interest" description="Disordered" evidence="2">
    <location>
        <begin position="1"/>
        <end position="22"/>
    </location>
</feature>
<feature type="compositionally biased region" description="Basic residues" evidence="2">
    <location>
        <begin position="1"/>
        <end position="16"/>
    </location>
</feature>
<name>RL16_BIFLD</name>
<organism>
    <name type="scientific">Bifidobacterium longum (strain DJO10A)</name>
    <dbReference type="NCBI Taxonomy" id="205913"/>
    <lineage>
        <taxon>Bacteria</taxon>
        <taxon>Bacillati</taxon>
        <taxon>Actinomycetota</taxon>
        <taxon>Actinomycetes</taxon>
        <taxon>Bifidobacteriales</taxon>
        <taxon>Bifidobacteriaceae</taxon>
        <taxon>Bifidobacterium</taxon>
    </lineage>
</organism>